<keyword id="KW-0227">DNA damage</keyword>
<keyword id="KW-0234">DNA repair</keyword>
<sequence>MPIQVLPPQLANQIAAGEVVERPASVVKELVENSLDAGATRIDIDIERGGAKLIRIRDNGCGIKKDELALALARHATSKIASLDDLEAIISLGFRGEALASISSVSRLTLTSRTSEQQEAWQAYAEGRDMDVTVKPAAHPVGTTLEVLDLFYNTPARRKFMRTEKTEFNHIDEIIRRIALARFDVTINLSHNGKVMRQYRAVAEGGQKERRLGAICGTAFLEQALAIEWQHGDLAMRGWVADPKTMNATLAEIQYCYVNGRMMRDRLINHAIRQACEDKLGADQQPAFVLYLEIDPHQVDVNVHPAKHEVRFHQSRLVHDFIYQGVLSVLQQQAEPSLPLTEDAISPRPIPENRVAAGRNQFAEPAVARQPEAPRYSSGASAPRPTGANYPHAPVYQKQQGALYSKLLDTPAVERKENVAPSAPALDGHSQSFGRVLTIIAPDMALLERDSHIALLALPVAERWLKQVQLTPGTNAACAQPLLIPVRLKVSAEEVAVLNRAKAVLVEMGIEFVVEAHHVTIRAVPLPLRQQNLQNLIPELIGYLAQQTSFDAANTAQWMARHLASDHNLWSMAQAITVLAEVERLYPQLVKAPPGGLLQPVDLHSAMKALKDE</sequence>
<accession>A4W5R1</accession>
<feature type="chain" id="PRO_1000058142" description="DNA mismatch repair protein MutL">
    <location>
        <begin position="1"/>
        <end position="613"/>
    </location>
</feature>
<feature type="region of interest" description="Disordered" evidence="2">
    <location>
        <begin position="364"/>
        <end position="393"/>
    </location>
</feature>
<organism>
    <name type="scientific">Enterobacter sp. (strain 638)</name>
    <dbReference type="NCBI Taxonomy" id="399742"/>
    <lineage>
        <taxon>Bacteria</taxon>
        <taxon>Pseudomonadati</taxon>
        <taxon>Pseudomonadota</taxon>
        <taxon>Gammaproteobacteria</taxon>
        <taxon>Enterobacterales</taxon>
        <taxon>Enterobacteriaceae</taxon>
        <taxon>Enterobacter</taxon>
    </lineage>
</organism>
<dbReference type="EMBL" id="CP000653">
    <property type="protein sequence ID" value="ABP59041.1"/>
    <property type="molecule type" value="Genomic_DNA"/>
</dbReference>
<dbReference type="RefSeq" id="WP_011915614.1">
    <property type="nucleotide sequence ID" value="NC_009436.1"/>
</dbReference>
<dbReference type="SMR" id="A4W5R1"/>
<dbReference type="STRING" id="399742.Ent638_0353"/>
<dbReference type="KEGG" id="ent:Ent638_0353"/>
<dbReference type="eggNOG" id="COG0323">
    <property type="taxonomic scope" value="Bacteria"/>
</dbReference>
<dbReference type="HOGENOM" id="CLU_004131_5_1_6"/>
<dbReference type="OrthoDB" id="9763467at2"/>
<dbReference type="Proteomes" id="UP000000230">
    <property type="component" value="Chromosome"/>
</dbReference>
<dbReference type="GO" id="GO:0032300">
    <property type="term" value="C:mismatch repair complex"/>
    <property type="evidence" value="ECO:0007669"/>
    <property type="project" value="InterPro"/>
</dbReference>
<dbReference type="GO" id="GO:0005524">
    <property type="term" value="F:ATP binding"/>
    <property type="evidence" value="ECO:0007669"/>
    <property type="project" value="InterPro"/>
</dbReference>
<dbReference type="GO" id="GO:0016887">
    <property type="term" value="F:ATP hydrolysis activity"/>
    <property type="evidence" value="ECO:0007669"/>
    <property type="project" value="InterPro"/>
</dbReference>
<dbReference type="GO" id="GO:0140664">
    <property type="term" value="F:ATP-dependent DNA damage sensor activity"/>
    <property type="evidence" value="ECO:0007669"/>
    <property type="project" value="InterPro"/>
</dbReference>
<dbReference type="GO" id="GO:0030983">
    <property type="term" value="F:mismatched DNA binding"/>
    <property type="evidence" value="ECO:0007669"/>
    <property type="project" value="InterPro"/>
</dbReference>
<dbReference type="GO" id="GO:0006298">
    <property type="term" value="P:mismatch repair"/>
    <property type="evidence" value="ECO:0007669"/>
    <property type="project" value="UniProtKB-UniRule"/>
</dbReference>
<dbReference type="CDD" id="cd16926">
    <property type="entry name" value="HATPase_MutL-MLH-PMS-like"/>
    <property type="match status" value="1"/>
</dbReference>
<dbReference type="CDD" id="cd03482">
    <property type="entry name" value="MutL_Trans_MutL"/>
    <property type="match status" value="1"/>
</dbReference>
<dbReference type="FunFam" id="3.30.230.10:FF:000013">
    <property type="entry name" value="DNA mismatch repair endonuclease MutL"/>
    <property type="match status" value="1"/>
</dbReference>
<dbReference type="FunFam" id="3.30.565.10:FF:000003">
    <property type="entry name" value="DNA mismatch repair endonuclease MutL"/>
    <property type="match status" value="1"/>
</dbReference>
<dbReference type="FunFam" id="3.30.1370.100:FF:000002">
    <property type="entry name" value="DNA mismatch repair protein MutL"/>
    <property type="match status" value="1"/>
</dbReference>
<dbReference type="Gene3D" id="3.30.230.10">
    <property type="match status" value="1"/>
</dbReference>
<dbReference type="Gene3D" id="3.30.565.10">
    <property type="entry name" value="Histidine kinase-like ATPase, C-terminal domain"/>
    <property type="match status" value="1"/>
</dbReference>
<dbReference type="Gene3D" id="3.30.1540.20">
    <property type="entry name" value="MutL, C-terminal domain, dimerisation subdomain"/>
    <property type="match status" value="1"/>
</dbReference>
<dbReference type="Gene3D" id="3.30.1370.100">
    <property type="entry name" value="MutL, C-terminal domain, regulatory subdomain"/>
    <property type="match status" value="1"/>
</dbReference>
<dbReference type="HAMAP" id="MF_00149">
    <property type="entry name" value="DNA_mis_repair"/>
    <property type="match status" value="1"/>
</dbReference>
<dbReference type="InterPro" id="IPR014762">
    <property type="entry name" value="DNA_mismatch_repair_CS"/>
</dbReference>
<dbReference type="InterPro" id="IPR020667">
    <property type="entry name" value="DNA_mismatch_repair_MutL"/>
</dbReference>
<dbReference type="InterPro" id="IPR013507">
    <property type="entry name" value="DNA_mismatch_S5_2-like"/>
</dbReference>
<dbReference type="InterPro" id="IPR036890">
    <property type="entry name" value="HATPase_C_sf"/>
</dbReference>
<dbReference type="InterPro" id="IPR002099">
    <property type="entry name" value="MutL/Mlh/PMS"/>
</dbReference>
<dbReference type="InterPro" id="IPR038973">
    <property type="entry name" value="MutL/Mlh/Pms-like"/>
</dbReference>
<dbReference type="InterPro" id="IPR014790">
    <property type="entry name" value="MutL_C"/>
</dbReference>
<dbReference type="InterPro" id="IPR042120">
    <property type="entry name" value="MutL_C_dimsub"/>
</dbReference>
<dbReference type="InterPro" id="IPR042121">
    <property type="entry name" value="MutL_C_regsub"/>
</dbReference>
<dbReference type="InterPro" id="IPR037198">
    <property type="entry name" value="MutL_C_sf"/>
</dbReference>
<dbReference type="InterPro" id="IPR020568">
    <property type="entry name" value="Ribosomal_Su5_D2-typ_SF"/>
</dbReference>
<dbReference type="InterPro" id="IPR014721">
    <property type="entry name" value="Ribsml_uS5_D2-typ_fold_subgr"/>
</dbReference>
<dbReference type="NCBIfam" id="TIGR00585">
    <property type="entry name" value="mutl"/>
    <property type="match status" value="1"/>
</dbReference>
<dbReference type="NCBIfam" id="NF000948">
    <property type="entry name" value="PRK00095.1-1"/>
    <property type="match status" value="1"/>
</dbReference>
<dbReference type="PANTHER" id="PTHR10073">
    <property type="entry name" value="DNA MISMATCH REPAIR PROTEIN MLH, PMS, MUTL"/>
    <property type="match status" value="1"/>
</dbReference>
<dbReference type="PANTHER" id="PTHR10073:SF12">
    <property type="entry name" value="DNA MISMATCH REPAIR PROTEIN MLH1"/>
    <property type="match status" value="1"/>
</dbReference>
<dbReference type="Pfam" id="PF01119">
    <property type="entry name" value="DNA_mis_repair"/>
    <property type="match status" value="1"/>
</dbReference>
<dbReference type="Pfam" id="PF13589">
    <property type="entry name" value="HATPase_c_3"/>
    <property type="match status" value="1"/>
</dbReference>
<dbReference type="Pfam" id="PF08676">
    <property type="entry name" value="MutL_C"/>
    <property type="match status" value="1"/>
</dbReference>
<dbReference type="SMART" id="SM01340">
    <property type="entry name" value="DNA_mis_repair"/>
    <property type="match status" value="1"/>
</dbReference>
<dbReference type="SMART" id="SM00853">
    <property type="entry name" value="MutL_C"/>
    <property type="match status" value="1"/>
</dbReference>
<dbReference type="SUPFAM" id="SSF55874">
    <property type="entry name" value="ATPase domain of HSP90 chaperone/DNA topoisomerase II/histidine kinase"/>
    <property type="match status" value="1"/>
</dbReference>
<dbReference type="SUPFAM" id="SSF118116">
    <property type="entry name" value="DNA mismatch repair protein MutL"/>
    <property type="match status" value="1"/>
</dbReference>
<dbReference type="SUPFAM" id="SSF54211">
    <property type="entry name" value="Ribosomal protein S5 domain 2-like"/>
    <property type="match status" value="1"/>
</dbReference>
<dbReference type="PROSITE" id="PS00058">
    <property type="entry name" value="DNA_MISMATCH_REPAIR_1"/>
    <property type="match status" value="1"/>
</dbReference>
<protein>
    <recommendedName>
        <fullName evidence="1">DNA mismatch repair protein MutL</fullName>
    </recommendedName>
</protein>
<name>MUTL_ENT38</name>
<gene>
    <name evidence="1" type="primary">mutL</name>
    <name type="ordered locus">Ent638_0353</name>
</gene>
<comment type="function">
    <text evidence="1">This protein is involved in the repair of mismatches in DNA. It is required for dam-dependent methyl-directed DNA mismatch repair. May act as a 'molecular matchmaker', a protein that promotes the formation of a stable complex between two or more DNA-binding proteins in an ATP-dependent manner without itself being part of a final effector complex.</text>
</comment>
<comment type="similarity">
    <text evidence="1">Belongs to the DNA mismatch repair MutL/HexB family.</text>
</comment>
<evidence type="ECO:0000255" key="1">
    <source>
        <dbReference type="HAMAP-Rule" id="MF_00149"/>
    </source>
</evidence>
<evidence type="ECO:0000256" key="2">
    <source>
        <dbReference type="SAM" id="MobiDB-lite"/>
    </source>
</evidence>
<proteinExistence type="inferred from homology"/>
<reference key="1">
    <citation type="journal article" date="2010" name="PLoS Genet.">
        <title>Genome sequence of the plant growth promoting endophytic bacterium Enterobacter sp. 638.</title>
        <authorList>
            <person name="Taghavi S."/>
            <person name="van der Lelie D."/>
            <person name="Hoffman A."/>
            <person name="Zhang Y.B."/>
            <person name="Walla M.D."/>
            <person name="Vangronsveld J."/>
            <person name="Newman L."/>
            <person name="Monchy S."/>
        </authorList>
    </citation>
    <scope>NUCLEOTIDE SEQUENCE [LARGE SCALE GENOMIC DNA]</scope>
    <source>
        <strain>638</strain>
    </source>
</reference>